<comment type="function">
    <text evidence="1">May play a role in endocytic and/or exocytic pathways.</text>
</comment>
<comment type="catalytic activity">
    <reaction>
        <text>a 1,2-diacyl-sn-glycero-3-phospho-(1D-myo-inositol) + ATP = a 1,2-diacyl-sn-glycero-3-phospho-(1D-myo-inositol 4-phosphate) + ADP + H(+)</text>
        <dbReference type="Rhea" id="RHEA:19877"/>
        <dbReference type="ChEBI" id="CHEBI:15378"/>
        <dbReference type="ChEBI" id="CHEBI:30616"/>
        <dbReference type="ChEBI" id="CHEBI:57880"/>
        <dbReference type="ChEBI" id="CHEBI:58178"/>
        <dbReference type="ChEBI" id="CHEBI:456216"/>
        <dbReference type="EC" id="2.7.1.67"/>
    </reaction>
</comment>
<comment type="cofactor">
    <cofactor evidence="1">
        <name>Mg(2+)</name>
        <dbReference type="ChEBI" id="CHEBI:18420"/>
    </cofactor>
    <cofactor evidence="1">
        <name>Mn(2+)</name>
        <dbReference type="ChEBI" id="CHEBI:29035"/>
    </cofactor>
</comment>
<comment type="subcellular location">
    <subcellularLocation>
        <location evidence="1">Cell membrane</location>
        <topology evidence="1">Peripheral membrane protein</topology>
    </subcellularLocation>
    <subcellularLocation>
        <location evidence="4">Vacuole membrane</location>
        <topology evidence="4">Peripheral membrane protein</topology>
    </subcellularLocation>
    <subcellularLocation>
        <location evidence="4">Golgi apparatus membrane</location>
        <topology evidence="4">Peripheral membrane protein</topology>
    </subcellularLocation>
</comment>
<comment type="similarity">
    <text evidence="5">Belongs to the PI3/PI4-kinase family.</text>
</comment>
<protein>
    <recommendedName>
        <fullName>Phosphatidylinositol 4-kinase lsb6</fullName>
        <shortName>PI4-kinase</shortName>
        <shortName>PtdIns-4-kinase</shortName>
        <ecNumber>2.7.1.67</ecNumber>
    </recommendedName>
</protein>
<name>LSB6_SCHPO</name>
<accession>Q9UT42</accession>
<accession>Q9UT71</accession>
<reference key="1">
    <citation type="journal article" date="2002" name="Nature">
        <title>The genome sequence of Schizosaccharomyces pombe.</title>
        <authorList>
            <person name="Wood V."/>
            <person name="Gwilliam R."/>
            <person name="Rajandream M.A."/>
            <person name="Lyne M.H."/>
            <person name="Lyne R."/>
            <person name="Stewart A."/>
            <person name="Sgouros J.G."/>
            <person name="Peat N."/>
            <person name="Hayles J."/>
            <person name="Baker S.G."/>
            <person name="Basham D."/>
            <person name="Bowman S."/>
            <person name="Brooks K."/>
            <person name="Brown D."/>
            <person name="Brown S."/>
            <person name="Chillingworth T."/>
            <person name="Churcher C.M."/>
            <person name="Collins M."/>
            <person name="Connor R."/>
            <person name="Cronin A."/>
            <person name="Davis P."/>
            <person name="Feltwell T."/>
            <person name="Fraser A."/>
            <person name="Gentles S."/>
            <person name="Goble A."/>
            <person name="Hamlin N."/>
            <person name="Harris D.E."/>
            <person name="Hidalgo J."/>
            <person name="Hodgson G."/>
            <person name="Holroyd S."/>
            <person name="Hornsby T."/>
            <person name="Howarth S."/>
            <person name="Huckle E.J."/>
            <person name="Hunt S."/>
            <person name="Jagels K."/>
            <person name="James K.D."/>
            <person name="Jones L."/>
            <person name="Jones M."/>
            <person name="Leather S."/>
            <person name="McDonald S."/>
            <person name="McLean J."/>
            <person name="Mooney P."/>
            <person name="Moule S."/>
            <person name="Mungall K.L."/>
            <person name="Murphy L.D."/>
            <person name="Niblett D."/>
            <person name="Odell C."/>
            <person name="Oliver K."/>
            <person name="O'Neil S."/>
            <person name="Pearson D."/>
            <person name="Quail M.A."/>
            <person name="Rabbinowitsch E."/>
            <person name="Rutherford K.M."/>
            <person name="Rutter S."/>
            <person name="Saunders D."/>
            <person name="Seeger K."/>
            <person name="Sharp S."/>
            <person name="Skelton J."/>
            <person name="Simmonds M.N."/>
            <person name="Squares R."/>
            <person name="Squares S."/>
            <person name="Stevens K."/>
            <person name="Taylor K."/>
            <person name="Taylor R.G."/>
            <person name="Tivey A."/>
            <person name="Walsh S.V."/>
            <person name="Warren T."/>
            <person name="Whitehead S."/>
            <person name="Woodward J.R."/>
            <person name="Volckaert G."/>
            <person name="Aert R."/>
            <person name="Robben J."/>
            <person name="Grymonprez B."/>
            <person name="Weltjens I."/>
            <person name="Vanstreels E."/>
            <person name="Rieger M."/>
            <person name="Schaefer M."/>
            <person name="Mueller-Auer S."/>
            <person name="Gabel C."/>
            <person name="Fuchs M."/>
            <person name="Duesterhoeft A."/>
            <person name="Fritzc C."/>
            <person name="Holzer E."/>
            <person name="Moestl D."/>
            <person name="Hilbert H."/>
            <person name="Borzym K."/>
            <person name="Langer I."/>
            <person name="Beck A."/>
            <person name="Lehrach H."/>
            <person name="Reinhardt R."/>
            <person name="Pohl T.M."/>
            <person name="Eger P."/>
            <person name="Zimmermann W."/>
            <person name="Wedler H."/>
            <person name="Wambutt R."/>
            <person name="Purnelle B."/>
            <person name="Goffeau A."/>
            <person name="Cadieu E."/>
            <person name="Dreano S."/>
            <person name="Gloux S."/>
            <person name="Lelaure V."/>
            <person name="Mottier S."/>
            <person name="Galibert F."/>
            <person name="Aves S.J."/>
            <person name="Xiang Z."/>
            <person name="Hunt C."/>
            <person name="Moore K."/>
            <person name="Hurst S.M."/>
            <person name="Lucas M."/>
            <person name="Rochet M."/>
            <person name="Gaillardin C."/>
            <person name="Tallada V.A."/>
            <person name="Garzon A."/>
            <person name="Thode G."/>
            <person name="Daga R.R."/>
            <person name="Cruzado L."/>
            <person name="Jimenez J."/>
            <person name="Sanchez M."/>
            <person name="del Rey F."/>
            <person name="Benito J."/>
            <person name="Dominguez A."/>
            <person name="Revuelta J.L."/>
            <person name="Moreno S."/>
            <person name="Armstrong J."/>
            <person name="Forsburg S.L."/>
            <person name="Cerutti L."/>
            <person name="Lowe T."/>
            <person name="McCombie W.R."/>
            <person name="Paulsen I."/>
            <person name="Potashkin J."/>
            <person name="Shpakovski G.V."/>
            <person name="Ussery D."/>
            <person name="Barrell B.G."/>
            <person name="Nurse P."/>
        </authorList>
    </citation>
    <scope>NUCLEOTIDE SEQUENCE [LARGE SCALE GENOMIC DNA]</scope>
    <source>
        <strain>972 / ATCC 24843</strain>
    </source>
</reference>
<reference key="2">
    <citation type="journal article" date="2006" name="Nat. Biotechnol.">
        <title>ORFeome cloning and global analysis of protein localization in the fission yeast Schizosaccharomyces pombe.</title>
        <authorList>
            <person name="Matsuyama A."/>
            <person name="Arai R."/>
            <person name="Yashiroda Y."/>
            <person name="Shirai A."/>
            <person name="Kamata A."/>
            <person name="Sekido S."/>
            <person name="Kobayashi Y."/>
            <person name="Hashimoto A."/>
            <person name="Hamamoto M."/>
            <person name="Hiraoka Y."/>
            <person name="Horinouchi S."/>
            <person name="Yoshida M."/>
        </authorList>
    </citation>
    <scope>SUBCELLULAR LOCATION [LARGE SCALE ANALYSIS]</scope>
</reference>
<sequence length="624" mass="71857">MESTFHSDTLDSFPNYQENSLNTNEEQTNPLESLRDGWASSNSSSSSSLLLPDENEGNEVFGSLKGLVTQSKFGQWANKLSKSLQARRRKSESISKPRVYYSVFMAPSWVLHAEKHWEEYPHYAGYDYKDYVRLLDATKEAIAHGVFPVLISKGSSGSYFVKNKVQKNIAVFKPKDEEPYGKLNPKWTKWFHRNLFPCFFGRSCLIPNTSYLSEAAACVLDRGLGLYLVPYTSVASISSPTFNYDYFARKAFLTRNKPLPEKTGSFQQFLDGFVVASKFFAQHPWPGTRHRETREYTESVASSEDFDIFDPFLAENEIETEFWTEELRLKFRFEFEKLVLLDYLMRNTDRNLDNWMIKICYEPCDNEEYYKSINLLSTNLTPNMSANSVDPAISQTSDFWKGPHFQIGAIDNSLAFPYKHPDSWRSFPYGWLSLPRSLFTQPFTEFTRQLFLHKLTSREWWEKLSDDLRNVFNQDLDFDEKMFSRQLSLVKGQAYNIVEVLKNPLMNIYDLLELPNLYVVEDVVRIEVNEPTSANSEEAEFGLPIKRDYGSILHPSCSQTFPPYPGSQLLQATPGRSFSSNAEALLPLNYITLLSKDSSSPKMLKDVIFERLQCASSNAVFSTC</sequence>
<proteinExistence type="inferred from homology"/>
<dbReference type="EC" id="2.7.1.67"/>
<dbReference type="EMBL" id="CU329670">
    <property type="protein sequence ID" value="CAB52282.2"/>
    <property type="molecule type" value="Genomic_DNA"/>
</dbReference>
<dbReference type="PIR" id="T39102">
    <property type="entry name" value="T39102"/>
</dbReference>
<dbReference type="RefSeq" id="XP_001713056.1">
    <property type="nucleotide sequence ID" value="XM_001713004.2"/>
</dbReference>
<dbReference type="SMR" id="Q9UT42"/>
<dbReference type="BioGRID" id="280607">
    <property type="interactions" value="2"/>
</dbReference>
<dbReference type="FunCoup" id="Q9UT42">
    <property type="interactions" value="180"/>
</dbReference>
<dbReference type="STRING" id="284812.Q9UT42"/>
<dbReference type="iPTMnet" id="Q9UT42"/>
<dbReference type="PaxDb" id="4896-SPAC343.19.1"/>
<dbReference type="EnsemblFungi" id="SPAC343.19.1">
    <property type="protein sequence ID" value="SPAC343.19.1:pep"/>
    <property type="gene ID" value="SPAC343.19"/>
</dbReference>
<dbReference type="PomBase" id="SPAC343.19">
    <property type="gene designation" value="lsb6"/>
</dbReference>
<dbReference type="VEuPathDB" id="FungiDB:SPAC343.19"/>
<dbReference type="eggNOG" id="KOG2381">
    <property type="taxonomic scope" value="Eukaryota"/>
</dbReference>
<dbReference type="HOGENOM" id="CLU_009049_1_0_1"/>
<dbReference type="InParanoid" id="Q9UT42"/>
<dbReference type="OMA" id="TFNYDYF"/>
<dbReference type="PhylomeDB" id="Q9UT42"/>
<dbReference type="Reactome" id="R-SPO-1483248">
    <property type="pathway name" value="Synthesis of PIPs at the ER membrane"/>
</dbReference>
<dbReference type="Reactome" id="R-SPO-1660499">
    <property type="pathway name" value="Synthesis of PIPs at the plasma membrane"/>
</dbReference>
<dbReference type="Reactome" id="R-SPO-1660514">
    <property type="pathway name" value="Synthesis of PIPs at the Golgi membrane"/>
</dbReference>
<dbReference type="Reactome" id="R-SPO-1660516">
    <property type="pathway name" value="Synthesis of PIPs at the early endosome membrane"/>
</dbReference>
<dbReference type="PRO" id="PR:Q9UT42"/>
<dbReference type="Proteomes" id="UP000002485">
    <property type="component" value="Chromosome I"/>
</dbReference>
<dbReference type="GO" id="GO:0032153">
    <property type="term" value="C:cell division site"/>
    <property type="evidence" value="ECO:0007005"/>
    <property type="project" value="PomBase"/>
</dbReference>
<dbReference type="GO" id="GO:0005768">
    <property type="term" value="C:endosome"/>
    <property type="evidence" value="ECO:0000318"/>
    <property type="project" value="GO_Central"/>
</dbReference>
<dbReference type="GO" id="GO:0000329">
    <property type="term" value="C:fungal-type vacuole membrane"/>
    <property type="evidence" value="ECO:0007005"/>
    <property type="project" value="PomBase"/>
</dbReference>
<dbReference type="GO" id="GO:0005794">
    <property type="term" value="C:Golgi apparatus"/>
    <property type="evidence" value="ECO:0007005"/>
    <property type="project" value="PomBase"/>
</dbReference>
<dbReference type="GO" id="GO:0000139">
    <property type="term" value="C:Golgi membrane"/>
    <property type="evidence" value="ECO:0007669"/>
    <property type="project" value="UniProtKB-SubCell"/>
</dbReference>
<dbReference type="GO" id="GO:0005886">
    <property type="term" value="C:plasma membrane"/>
    <property type="evidence" value="ECO:0000318"/>
    <property type="project" value="GO_Central"/>
</dbReference>
<dbReference type="GO" id="GO:0005802">
    <property type="term" value="C:trans-Golgi network"/>
    <property type="evidence" value="ECO:0000318"/>
    <property type="project" value="GO_Central"/>
</dbReference>
<dbReference type="GO" id="GO:0004430">
    <property type="term" value="F:1-phosphatidylinositol 4-kinase activity"/>
    <property type="evidence" value="ECO:0000318"/>
    <property type="project" value="GO_Central"/>
</dbReference>
<dbReference type="GO" id="GO:0005524">
    <property type="term" value="F:ATP binding"/>
    <property type="evidence" value="ECO:0007669"/>
    <property type="project" value="UniProtKB-KW"/>
</dbReference>
<dbReference type="GO" id="GO:0046872">
    <property type="term" value="F:metal ion binding"/>
    <property type="evidence" value="ECO:0007669"/>
    <property type="project" value="UniProtKB-KW"/>
</dbReference>
<dbReference type="GO" id="GO:0007032">
    <property type="term" value="P:endosome organization"/>
    <property type="evidence" value="ECO:0000318"/>
    <property type="project" value="GO_Central"/>
</dbReference>
<dbReference type="GO" id="GO:0007030">
    <property type="term" value="P:Golgi organization"/>
    <property type="evidence" value="ECO:0000318"/>
    <property type="project" value="GO_Central"/>
</dbReference>
<dbReference type="GO" id="GO:0046854">
    <property type="term" value="P:phosphatidylinositol phosphate biosynthetic process"/>
    <property type="evidence" value="ECO:0000315"/>
    <property type="project" value="PomBase"/>
</dbReference>
<dbReference type="InterPro" id="IPR039756">
    <property type="entry name" value="Lsb6/PI4K2"/>
</dbReference>
<dbReference type="InterPro" id="IPR000403">
    <property type="entry name" value="PI3/4_kinase_cat_dom"/>
</dbReference>
<dbReference type="InterPro" id="IPR018936">
    <property type="entry name" value="PI3/4_kinase_CS"/>
</dbReference>
<dbReference type="PANTHER" id="PTHR12865:SF1">
    <property type="entry name" value="PHOSPHATIDYLINOSITOL 4-KINASE TYPE 2"/>
    <property type="match status" value="1"/>
</dbReference>
<dbReference type="PANTHER" id="PTHR12865">
    <property type="entry name" value="PHOSPHATIDYLINOSITOL 4-KINASE TYPE-II"/>
    <property type="match status" value="1"/>
</dbReference>
<dbReference type="Pfam" id="PF00454">
    <property type="entry name" value="PI3_PI4_kinase"/>
    <property type="match status" value="1"/>
</dbReference>
<dbReference type="PROSITE" id="PS00916">
    <property type="entry name" value="PI3_4_KINASE_2"/>
    <property type="match status" value="1"/>
</dbReference>
<dbReference type="PROSITE" id="PS50290">
    <property type="entry name" value="PI3_4_KINASE_3"/>
    <property type="match status" value="1"/>
</dbReference>
<evidence type="ECO:0000250" key="1"/>
<evidence type="ECO:0000255" key="2">
    <source>
        <dbReference type="PROSITE-ProRule" id="PRU00269"/>
    </source>
</evidence>
<evidence type="ECO:0000256" key="3">
    <source>
        <dbReference type="SAM" id="MobiDB-lite"/>
    </source>
</evidence>
<evidence type="ECO:0000269" key="4">
    <source>
    </source>
</evidence>
<evidence type="ECO:0000305" key="5"/>
<feature type="chain" id="PRO_0000088849" description="Phosphatidylinositol 4-kinase lsb6">
    <location>
        <begin position="1"/>
        <end position="624"/>
    </location>
</feature>
<feature type="domain" description="PI3K/PI4K catalytic" evidence="2">
    <location>
        <begin position="145"/>
        <end position="520"/>
    </location>
</feature>
<feature type="region of interest" description="Disordered" evidence="3">
    <location>
        <begin position="1"/>
        <end position="53"/>
    </location>
</feature>
<feature type="region of interest" description="G-loop" evidence="2">
    <location>
        <begin position="151"/>
        <end position="157"/>
    </location>
</feature>
<feature type="region of interest" description="Catalytic loop" evidence="2">
    <location>
        <begin position="346"/>
        <end position="354"/>
    </location>
</feature>
<feature type="region of interest" description="Activation loop" evidence="2">
    <location>
        <begin position="409"/>
        <end position="429"/>
    </location>
</feature>
<feature type="compositionally biased region" description="Polar residues" evidence="3">
    <location>
        <begin position="1"/>
        <end position="31"/>
    </location>
</feature>
<feature type="compositionally biased region" description="Low complexity" evidence="3">
    <location>
        <begin position="40"/>
        <end position="51"/>
    </location>
</feature>
<keyword id="KW-0067">ATP-binding</keyword>
<keyword id="KW-1003">Cell membrane</keyword>
<keyword id="KW-0333">Golgi apparatus</keyword>
<keyword id="KW-0418">Kinase</keyword>
<keyword id="KW-0460">Magnesium</keyword>
<keyword id="KW-0464">Manganese</keyword>
<keyword id="KW-0472">Membrane</keyword>
<keyword id="KW-0479">Metal-binding</keyword>
<keyword id="KW-0547">Nucleotide-binding</keyword>
<keyword id="KW-1185">Reference proteome</keyword>
<keyword id="KW-0808">Transferase</keyword>
<keyword id="KW-0926">Vacuole</keyword>
<gene>
    <name type="primary">lsb6</name>
    <name type="ORF">SPAC343.19</name>
    <name type="ORF">SPAC824.01</name>
</gene>
<organism>
    <name type="scientific">Schizosaccharomyces pombe (strain 972 / ATCC 24843)</name>
    <name type="common">Fission yeast</name>
    <dbReference type="NCBI Taxonomy" id="284812"/>
    <lineage>
        <taxon>Eukaryota</taxon>
        <taxon>Fungi</taxon>
        <taxon>Dikarya</taxon>
        <taxon>Ascomycota</taxon>
        <taxon>Taphrinomycotina</taxon>
        <taxon>Schizosaccharomycetes</taxon>
        <taxon>Schizosaccharomycetales</taxon>
        <taxon>Schizosaccharomycetaceae</taxon>
        <taxon>Schizosaccharomyces</taxon>
    </lineage>
</organism>